<accession>Q9C1B5</accession>
<name>TRI10_FUSSP</name>
<gene>
    <name evidence="3" type="primary">TRI10</name>
</gene>
<feature type="chain" id="PRO_0000442372" description="Trichothecene biosynthesis transcription regulator TRI10">
    <location>
        <begin position="1"/>
        <end position="420"/>
    </location>
</feature>
<comment type="function">
    <text evidence="1 2">Transcriptional activator of all of the trichothecene biosynthesis genes (PubMed:11679358, PubMed:12732543). Acts upstream of the cluster-encoded transcription factor TRI6 and is necessary for full expression of both the other trichothecene genes and the genes for the primary metabolic pathway that precedes the trichothecene biosynthetic pathway (PubMed:11679358, PubMed:12732543).</text>
</comment>
<comment type="subcellular location">
    <subcellularLocation>
        <location evidence="5">Nucleus</location>
    </subcellularLocation>
</comment>
<comment type="disruption phenotype">
    <text evidence="1 2">Abolishes T-2 toxin production and dramatically decreases the transcript accumulation for trichothecene genes and an apparent farnesyl pyrophosphate synthetase (FPPS) gene (PubMed:11679358, PubMed:12732543).</text>
</comment>
<comment type="similarity">
    <text evidence="5">Belongs to the TRI10 transcription regulator family.</text>
</comment>
<sequence length="420" mass="47458">MEFPKPRQFRETSLLMYYLDVVFPLQYISPNNNCLGKREWLLTILTSARPTYYATLCLALLYKESLSTSCRSEQTLVWKREKTYYYILALQESQKLLGGLNKTFGITRLKGTVVALACMLQLIGFESSHLSRGDWRVHLLAANTLIPVLAEGWSTALQSGPPATSIWCELDESDFDSIDDQTSLSFEYLGALRFLSNSLAKIGILSCISVGPAAPFEDYGHLLDQPGLIQLEEVLGCKNWAMLTILEVGKLDRWKRQEQEHNRLSLKTLAMRAMIIEDMLTDELQKLPTSETLPDLITHIYAASIATYLHTVVSGLNPNLSEVQDSVCATILLLERLPDLQAVASVTWPLAVTGCMASESHKDFFRSTLRSYEATFSSLKKYDGVLEVLEDAWKKREVDTESPMRWEDLMDHHGLPVLLF</sequence>
<evidence type="ECO:0000269" key="1">
    <source>
    </source>
</evidence>
<evidence type="ECO:0000269" key="2">
    <source>
    </source>
</evidence>
<evidence type="ECO:0000303" key="3">
    <source>
    </source>
</evidence>
<evidence type="ECO:0000303" key="4">
    <source>
    </source>
</evidence>
<evidence type="ECO:0000305" key="5"/>
<keyword id="KW-0539">Nucleus</keyword>
<organism>
    <name type="scientific">Fusarium sporotrichioides</name>
    <dbReference type="NCBI Taxonomy" id="5514"/>
    <lineage>
        <taxon>Eukaryota</taxon>
        <taxon>Fungi</taxon>
        <taxon>Dikarya</taxon>
        <taxon>Ascomycota</taxon>
        <taxon>Pezizomycotina</taxon>
        <taxon>Sordariomycetes</taxon>
        <taxon>Hypocreomycetidae</taxon>
        <taxon>Hypocreales</taxon>
        <taxon>Nectriaceae</taxon>
        <taxon>Fusarium</taxon>
    </lineage>
</organism>
<proteinExistence type="inferred from homology"/>
<dbReference type="EMBL" id="AF359360">
    <property type="protein sequence ID" value="AAK33069.1"/>
    <property type="molecule type" value="Genomic_DNA"/>
</dbReference>
<dbReference type="EMBL" id="AF364179">
    <property type="protein sequence ID" value="AAK53383.1"/>
    <property type="molecule type" value="Genomic_DNA"/>
</dbReference>
<dbReference type="GO" id="GO:0005634">
    <property type="term" value="C:nucleus"/>
    <property type="evidence" value="ECO:0007669"/>
    <property type="project" value="UniProtKB-SubCell"/>
</dbReference>
<dbReference type="GO" id="GO:0003700">
    <property type="term" value="F:DNA-binding transcription factor activity"/>
    <property type="evidence" value="ECO:0007669"/>
    <property type="project" value="TreeGrafter"/>
</dbReference>
<dbReference type="GO" id="GO:0000976">
    <property type="term" value="F:transcription cis-regulatory region binding"/>
    <property type="evidence" value="ECO:0007669"/>
    <property type="project" value="TreeGrafter"/>
</dbReference>
<dbReference type="GO" id="GO:0045944">
    <property type="term" value="P:positive regulation of transcription by RNA polymerase II"/>
    <property type="evidence" value="ECO:0007669"/>
    <property type="project" value="TreeGrafter"/>
</dbReference>
<dbReference type="InterPro" id="IPR021858">
    <property type="entry name" value="Fun_TF"/>
</dbReference>
<dbReference type="PANTHER" id="PTHR37534:SF26">
    <property type="entry name" value="TRANSCRIPTION FACTOR, PUTATIVE-RELATED"/>
    <property type="match status" value="1"/>
</dbReference>
<dbReference type="PANTHER" id="PTHR37534">
    <property type="entry name" value="TRANSCRIPTIONAL ACTIVATOR PROTEIN UGA3"/>
    <property type="match status" value="1"/>
</dbReference>
<dbReference type="Pfam" id="PF11951">
    <property type="entry name" value="Fungal_trans_2"/>
    <property type="match status" value="1"/>
</dbReference>
<protein>
    <recommendedName>
        <fullName evidence="4">Trichothecene biosynthesis transcription regulator TRI10</fullName>
    </recommendedName>
    <alternativeName>
        <fullName evidence="3">Core trichothecene cluster (CTC) protein 10</fullName>
    </alternativeName>
</protein>
<reference key="1">
    <citation type="journal article" date="2001" name="Appl. Environ. Microbiol.">
        <title>A novel regulatory gene, Tri10, controls trichothecene toxin production and gene expression.</title>
        <authorList>
            <person name="Tag A.G."/>
            <person name="Garifullina G.F."/>
            <person name="Peplow A.W."/>
            <person name="Ake C. Jr."/>
            <person name="Phillips T.D."/>
            <person name="Hohn T.M."/>
            <person name="Beremand M.N."/>
        </authorList>
    </citation>
    <scope>NUCLEOTIDE SEQUENCE [GENOMIC DNA]</scope>
    <scope>FUNCTION</scope>
    <scope>DISRUPTION PHENOTYPE</scope>
    <source>
        <strain>ATCC 24631 / NRRL 3299</strain>
    </source>
</reference>
<reference key="2">
    <citation type="journal article" date="2001" name="Fungal Genet. Biol.">
        <title>A genetic and biochemical approach to study trichothecene diversity in Fusarium sporotrichioides and Fusarium graminearum.</title>
        <authorList>
            <person name="Brown D.W."/>
            <person name="McCormick S.P."/>
            <person name="Alexander N.J."/>
            <person name="Proctor R.H."/>
            <person name="Desjardins A.E."/>
        </authorList>
    </citation>
    <scope>NUCLEOTIDE SEQUENCE [GENOMIC DNA]</scope>
    <scope>IDENTIFICATION</scope>
    <source>
        <strain>ATCC 24631 / NRRL 3299</strain>
    </source>
</reference>
<reference key="3">
    <citation type="journal article" date="2003" name="Appl. Environ. Microbiol.">
        <title>Identification of new genes positively regulated by Tri10 and a regulatory network for trichothecene mycotoxin production.</title>
        <authorList>
            <person name="Peplow A.W."/>
            <person name="Tag A.G."/>
            <person name="Garifullina G.F."/>
            <person name="Beremand M.N."/>
        </authorList>
    </citation>
    <scope>FUNCTION</scope>
    <scope>DISRUPTION PHENOTYPE</scope>
    <source>
        <strain>ATCC 24631 / NRRL 3299</strain>
    </source>
</reference>